<protein>
    <recommendedName>
        <fullName evidence="1">Urease subunit gamma</fullName>
        <ecNumber evidence="1">3.5.1.5</ecNumber>
    </recommendedName>
    <alternativeName>
        <fullName evidence="1">Urea amidohydrolase subunit gamma</fullName>
    </alternativeName>
</protein>
<proteinExistence type="inferred from homology"/>
<name>URE3_YERPA</name>
<sequence>MQLTPREVEKLMIYTLSDVAFKRKARGLKLNYPEAVSIITVTAMEGARDGKSVEDVMKEASKVLTKDDVMDGVADLIPNVQVEAIFTDGSRLVTVHDPIK</sequence>
<reference key="1">
    <citation type="journal article" date="2006" name="J. Bacteriol.">
        <title>Complete genome sequence of Yersinia pestis strains Antiqua and Nepal516: evidence of gene reduction in an emerging pathogen.</title>
        <authorList>
            <person name="Chain P.S.G."/>
            <person name="Hu P."/>
            <person name="Malfatti S.A."/>
            <person name="Radnedge L."/>
            <person name="Larimer F."/>
            <person name="Vergez L.M."/>
            <person name="Worsham P."/>
            <person name="Chu M.C."/>
            <person name="Andersen G.L."/>
        </authorList>
    </citation>
    <scope>NUCLEOTIDE SEQUENCE [LARGE SCALE GENOMIC DNA]</scope>
    <source>
        <strain>Antiqua</strain>
    </source>
</reference>
<comment type="catalytic activity">
    <reaction evidence="1">
        <text>urea + 2 H2O + H(+) = hydrogencarbonate + 2 NH4(+)</text>
        <dbReference type="Rhea" id="RHEA:20557"/>
        <dbReference type="ChEBI" id="CHEBI:15377"/>
        <dbReference type="ChEBI" id="CHEBI:15378"/>
        <dbReference type="ChEBI" id="CHEBI:16199"/>
        <dbReference type="ChEBI" id="CHEBI:17544"/>
        <dbReference type="ChEBI" id="CHEBI:28938"/>
        <dbReference type="EC" id="3.5.1.5"/>
    </reaction>
</comment>
<comment type="pathway">
    <text evidence="1">Nitrogen metabolism; urea degradation; CO(2) and NH(3) from urea (urease route): step 1/1.</text>
</comment>
<comment type="subunit">
    <text evidence="1">Heterotrimer of UreA (gamma), UreB (beta) and UreC (alpha) subunits. Three heterotrimers associate to form the active enzyme.</text>
</comment>
<comment type="subcellular location">
    <subcellularLocation>
        <location evidence="1">Cytoplasm</location>
    </subcellularLocation>
</comment>
<comment type="similarity">
    <text evidence="1">Belongs to the urease gamma subunit family.</text>
</comment>
<organism>
    <name type="scientific">Yersinia pestis bv. Antiqua (strain Antiqua)</name>
    <dbReference type="NCBI Taxonomy" id="360102"/>
    <lineage>
        <taxon>Bacteria</taxon>
        <taxon>Pseudomonadati</taxon>
        <taxon>Pseudomonadota</taxon>
        <taxon>Gammaproteobacteria</taxon>
        <taxon>Enterobacterales</taxon>
        <taxon>Yersiniaceae</taxon>
        <taxon>Yersinia</taxon>
    </lineage>
</organism>
<evidence type="ECO:0000255" key="1">
    <source>
        <dbReference type="HAMAP-Rule" id="MF_00739"/>
    </source>
</evidence>
<accession>Q1C5B5</accession>
<keyword id="KW-0963">Cytoplasm</keyword>
<keyword id="KW-0378">Hydrolase</keyword>
<gene>
    <name evidence="1" type="primary">ureA</name>
    <name type="ordered locus">YPA_2392</name>
</gene>
<dbReference type="EC" id="3.5.1.5" evidence="1"/>
<dbReference type="EMBL" id="CP000308">
    <property type="protein sequence ID" value="ABG14357.1"/>
    <property type="molecule type" value="Genomic_DNA"/>
</dbReference>
<dbReference type="RefSeq" id="WP_002215288.1">
    <property type="nucleotide sequence ID" value="NZ_CP009906.1"/>
</dbReference>
<dbReference type="SMR" id="Q1C5B5"/>
<dbReference type="KEGG" id="ypa:YPA_2392"/>
<dbReference type="UniPathway" id="UPA00258">
    <property type="reaction ID" value="UER00370"/>
</dbReference>
<dbReference type="Proteomes" id="UP000001971">
    <property type="component" value="Chromosome"/>
</dbReference>
<dbReference type="GO" id="GO:0005737">
    <property type="term" value="C:cytoplasm"/>
    <property type="evidence" value="ECO:0007669"/>
    <property type="project" value="UniProtKB-SubCell"/>
</dbReference>
<dbReference type="GO" id="GO:0016151">
    <property type="term" value="F:nickel cation binding"/>
    <property type="evidence" value="ECO:0007669"/>
    <property type="project" value="InterPro"/>
</dbReference>
<dbReference type="GO" id="GO:0009039">
    <property type="term" value="F:urease activity"/>
    <property type="evidence" value="ECO:0007669"/>
    <property type="project" value="UniProtKB-UniRule"/>
</dbReference>
<dbReference type="GO" id="GO:0043419">
    <property type="term" value="P:urea catabolic process"/>
    <property type="evidence" value="ECO:0007669"/>
    <property type="project" value="UniProtKB-UniRule"/>
</dbReference>
<dbReference type="CDD" id="cd00390">
    <property type="entry name" value="Urease_gamma"/>
    <property type="match status" value="1"/>
</dbReference>
<dbReference type="Gene3D" id="3.30.280.10">
    <property type="entry name" value="Urease, gamma-like subunit"/>
    <property type="match status" value="1"/>
</dbReference>
<dbReference type="HAMAP" id="MF_00739">
    <property type="entry name" value="Urease_gamma"/>
    <property type="match status" value="1"/>
</dbReference>
<dbReference type="InterPro" id="IPR012010">
    <property type="entry name" value="Urease_gamma"/>
</dbReference>
<dbReference type="InterPro" id="IPR002026">
    <property type="entry name" value="Urease_gamma/gamma-beta_su"/>
</dbReference>
<dbReference type="InterPro" id="IPR036463">
    <property type="entry name" value="Urease_gamma_sf"/>
</dbReference>
<dbReference type="InterPro" id="IPR050069">
    <property type="entry name" value="Urease_subunit"/>
</dbReference>
<dbReference type="NCBIfam" id="NF009712">
    <property type="entry name" value="PRK13241.1"/>
    <property type="match status" value="1"/>
</dbReference>
<dbReference type="NCBIfam" id="TIGR00193">
    <property type="entry name" value="urease_gam"/>
    <property type="match status" value="1"/>
</dbReference>
<dbReference type="PANTHER" id="PTHR33569">
    <property type="entry name" value="UREASE"/>
    <property type="match status" value="1"/>
</dbReference>
<dbReference type="PANTHER" id="PTHR33569:SF1">
    <property type="entry name" value="UREASE"/>
    <property type="match status" value="1"/>
</dbReference>
<dbReference type="Pfam" id="PF00547">
    <property type="entry name" value="Urease_gamma"/>
    <property type="match status" value="1"/>
</dbReference>
<dbReference type="PIRSF" id="PIRSF001223">
    <property type="entry name" value="Urease_gamma"/>
    <property type="match status" value="1"/>
</dbReference>
<dbReference type="SUPFAM" id="SSF54111">
    <property type="entry name" value="Urease, gamma-subunit"/>
    <property type="match status" value="1"/>
</dbReference>
<feature type="chain" id="PRO_1000046378" description="Urease subunit gamma">
    <location>
        <begin position="1"/>
        <end position="100"/>
    </location>
</feature>